<organism>
    <name type="scientific">Arthroderma gypseum (strain ATCC MYA-4604 / CBS 118893)</name>
    <name type="common">Microsporum gypseum</name>
    <dbReference type="NCBI Taxonomy" id="535722"/>
    <lineage>
        <taxon>Eukaryota</taxon>
        <taxon>Fungi</taxon>
        <taxon>Dikarya</taxon>
        <taxon>Ascomycota</taxon>
        <taxon>Pezizomycotina</taxon>
        <taxon>Eurotiomycetes</taxon>
        <taxon>Eurotiomycetidae</taxon>
        <taxon>Onygenales</taxon>
        <taxon>Arthrodermataceae</taxon>
        <taxon>Nannizzia</taxon>
    </lineage>
</organism>
<gene>
    <name type="primary">MEP3</name>
    <name type="ORF">MGYG_08200</name>
</gene>
<feature type="signal peptide" evidence="2">
    <location>
        <begin position="1"/>
        <end position="18"/>
    </location>
</feature>
<feature type="propeptide" id="PRO_0000407164" evidence="1">
    <location>
        <begin position="19"/>
        <end position="246"/>
    </location>
</feature>
<feature type="chain" id="PRO_0000407165" description="Extracellular metalloproteinase 3">
    <location>
        <begin position="247"/>
        <end position="633"/>
    </location>
</feature>
<feature type="active site" evidence="3">
    <location>
        <position position="430"/>
    </location>
</feature>
<feature type="binding site" evidence="3">
    <location>
        <position position="429"/>
    </location>
    <ligand>
        <name>Zn(2+)</name>
        <dbReference type="ChEBI" id="CHEBI:29105"/>
        <note>catalytic</note>
    </ligand>
</feature>
<feature type="binding site" evidence="3">
    <location>
        <position position="433"/>
    </location>
    <ligand>
        <name>Zn(2+)</name>
        <dbReference type="ChEBI" id="CHEBI:29105"/>
        <note>catalytic</note>
    </ligand>
</feature>
<feature type="glycosylation site" description="N-linked (GlcNAc...) asparagine" evidence="2">
    <location>
        <position position="232"/>
    </location>
</feature>
<feature type="glycosylation site" description="N-linked (GlcNAc...) asparagine" evidence="2">
    <location>
        <position position="410"/>
    </location>
</feature>
<feature type="glycosylation site" description="N-linked (GlcNAc...) asparagine" evidence="2">
    <location>
        <position position="480"/>
    </location>
</feature>
<feature type="glycosylation site" description="N-linked (GlcNAc...) asparagine" evidence="2">
    <location>
        <position position="622"/>
    </location>
</feature>
<feature type="sequence conflict" description="In Ref. 1; BAD01605." evidence="4" ref="1">
    <original>L</original>
    <variation>P</variation>
    <location>
        <position position="110"/>
    </location>
</feature>
<feature type="sequence conflict" description="In Ref. 1; BAD01605." evidence="4" ref="1">
    <original>Q</original>
    <variation>S</variation>
    <location>
        <position position="402"/>
    </location>
</feature>
<feature type="sequence conflict" description="In Ref. 1; BAD01605." evidence="4" ref="1">
    <original>A</original>
    <variation>G</variation>
    <location>
        <position position="447"/>
    </location>
</feature>
<feature type="sequence conflict" description="In Ref. 1; BAD01605." evidence="4" ref="1">
    <original>T</original>
    <variation>A</variation>
    <location>
        <position position="476"/>
    </location>
</feature>
<feature type="sequence conflict" description="In Ref. 1; BAD01605." evidence="4" ref="1">
    <original>S</original>
    <variation>N</variation>
    <location>
        <position position="502"/>
    </location>
</feature>
<feature type="sequence conflict" description="In Ref. 1; BAD01605." evidence="4" ref="1">
    <original>I</original>
    <variation>Y</variation>
    <location>
        <position position="522"/>
    </location>
</feature>
<feature type="sequence conflict" description="In Ref. 1; BAD01605." evidence="4" ref="1">
    <original>S</original>
    <variation>T</variation>
    <location>
        <position position="528"/>
    </location>
</feature>
<feature type="sequence conflict" description="In Ref. 1; BAD01605." evidence="4" ref="1">
    <original>E</original>
    <variation>D</variation>
    <location>
        <position position="532"/>
    </location>
</feature>
<feature type="sequence conflict" description="In Ref. 1; BAD01605." evidence="4" ref="1">
    <original>Q</original>
    <variation>K</variation>
    <location>
        <position position="628"/>
    </location>
</feature>
<dbReference type="EC" id="3.4.24.-"/>
<dbReference type="EMBL" id="AB126166">
    <property type="protein sequence ID" value="BAD01605.1"/>
    <property type="molecule type" value="mRNA"/>
</dbReference>
<dbReference type="EMBL" id="DS989829">
    <property type="protein sequence ID" value="EFR05186.1"/>
    <property type="molecule type" value="Genomic_DNA"/>
</dbReference>
<dbReference type="RefSeq" id="XP_003170021.1">
    <property type="nucleotide sequence ID" value="XM_003169973.1"/>
</dbReference>
<dbReference type="SMR" id="E4V5B2"/>
<dbReference type="MEROPS" id="M36.001"/>
<dbReference type="GlyCosmos" id="E4V5B2">
    <property type="glycosylation" value="4 sites, No reported glycans"/>
</dbReference>
<dbReference type="GeneID" id="10025256"/>
<dbReference type="VEuPathDB" id="FungiDB:MGYG_08200"/>
<dbReference type="eggNOG" id="ENOG502QTDC">
    <property type="taxonomic scope" value="Eukaryota"/>
</dbReference>
<dbReference type="HOGENOM" id="CLU_012703_3_0_1"/>
<dbReference type="InParanoid" id="E4V5B2"/>
<dbReference type="OMA" id="IRKDSYT"/>
<dbReference type="OrthoDB" id="3227768at2759"/>
<dbReference type="Proteomes" id="UP000002669">
    <property type="component" value="Unassembled WGS sequence"/>
</dbReference>
<dbReference type="GO" id="GO:0005576">
    <property type="term" value="C:extracellular region"/>
    <property type="evidence" value="ECO:0007669"/>
    <property type="project" value="UniProtKB-SubCell"/>
</dbReference>
<dbReference type="GO" id="GO:0004222">
    <property type="term" value="F:metalloendopeptidase activity"/>
    <property type="evidence" value="ECO:0007669"/>
    <property type="project" value="InterPro"/>
</dbReference>
<dbReference type="GO" id="GO:0008270">
    <property type="term" value="F:zinc ion binding"/>
    <property type="evidence" value="ECO:0007669"/>
    <property type="project" value="InterPro"/>
</dbReference>
<dbReference type="GO" id="GO:0006508">
    <property type="term" value="P:proteolysis"/>
    <property type="evidence" value="ECO:0007669"/>
    <property type="project" value="UniProtKB-KW"/>
</dbReference>
<dbReference type="CDD" id="cd09596">
    <property type="entry name" value="M36"/>
    <property type="match status" value="1"/>
</dbReference>
<dbReference type="Gene3D" id="3.10.170.10">
    <property type="match status" value="1"/>
</dbReference>
<dbReference type="Gene3D" id="1.10.390.10">
    <property type="entry name" value="Neutral Protease Domain 2"/>
    <property type="match status" value="1"/>
</dbReference>
<dbReference type="InterPro" id="IPR011096">
    <property type="entry name" value="FTP_domain"/>
</dbReference>
<dbReference type="InterPro" id="IPR050371">
    <property type="entry name" value="Fungal_virulence_M36"/>
</dbReference>
<dbReference type="InterPro" id="IPR001842">
    <property type="entry name" value="Peptidase_M36"/>
</dbReference>
<dbReference type="InterPro" id="IPR027268">
    <property type="entry name" value="Peptidase_M4/M1_CTD_sf"/>
</dbReference>
<dbReference type="PANTHER" id="PTHR33478">
    <property type="entry name" value="EXTRACELLULAR METALLOPROTEINASE MEP"/>
    <property type="match status" value="1"/>
</dbReference>
<dbReference type="PANTHER" id="PTHR33478:SF1">
    <property type="entry name" value="EXTRACELLULAR METALLOPROTEINASE MEP"/>
    <property type="match status" value="1"/>
</dbReference>
<dbReference type="Pfam" id="PF07504">
    <property type="entry name" value="FTP"/>
    <property type="match status" value="1"/>
</dbReference>
<dbReference type="Pfam" id="PF02128">
    <property type="entry name" value="Peptidase_M36"/>
    <property type="match status" value="1"/>
</dbReference>
<dbReference type="PRINTS" id="PR00999">
    <property type="entry name" value="FUNGALYSIN"/>
</dbReference>
<dbReference type="SUPFAM" id="SSF55486">
    <property type="entry name" value="Metalloproteases ('zincins'), catalytic domain"/>
    <property type="match status" value="1"/>
</dbReference>
<dbReference type="PROSITE" id="PS00142">
    <property type="entry name" value="ZINC_PROTEASE"/>
    <property type="match status" value="1"/>
</dbReference>
<accession>E4V5B2</accession>
<accession>Q75UE7</accession>
<keyword id="KW-0325">Glycoprotein</keyword>
<keyword id="KW-0378">Hydrolase</keyword>
<keyword id="KW-0479">Metal-binding</keyword>
<keyword id="KW-0482">Metalloprotease</keyword>
<keyword id="KW-0645">Protease</keyword>
<keyword id="KW-1185">Reference proteome</keyword>
<keyword id="KW-0964">Secreted</keyword>
<keyword id="KW-0732">Signal</keyword>
<keyword id="KW-0862">Zinc</keyword>
<keyword id="KW-0865">Zymogen</keyword>
<sequence length="633" mass="69329">MHGLLLAGLLALPMNVLAHPAEHHASNVLSRRGVDIDSFRLPLKAKYMDNEAAAEKIQALSFTKDDDYVSTATKLVKSTFPKSTFRVVDDHYIGTNGIGHVHFKQTAHGLDIDNSDFNVNIDRDGKVFSFGNSFFTGEIPKENPMVKRAFSDPVKALKGAVKALSLPVKSDNAKAKNVAGKETVEFMGTSGALSAPKAKLVYLQKDDGTLALTWRVETDVGENWLLSYVDANNSETVHNVVDYVASAEYKVFAWGLNDPTEGNPTSIRDPWTDASPYTWNSDGNTKYPTTRGNNAIAQDNPTGGSQYLNNYRPQSPNLIFSYPWSATATPPSSYKDFSITQLFYTTNRFHDLLYSFGFNEAAGNFQVNNGNKGGRGNDFAIVNAQDGSGTNNANFATPPDGQPGRMRMYNWTTARPNRDGCLEAGIVIHEYAHGLSNRLCGGPANSACLNALESGGMGEGWGDFYATAIRLKPRDTKNTNYSMGAWAANNPKGIRAYLYSTSLQTNPYMYTSVNSLREVHQIGTVWASMLYELMWALIEAHGNTYSANPVFRNGVPQDGRHLAMKLVMDGMALQPCNPNFVQARDAIIDADRALTNSANKCTIWKAFAKRGLGYGAKYDSRNRTGSNQLPPGC</sequence>
<comment type="function">
    <text evidence="1">Secreted metalloproteinase that allows assimilation of proteinaceous substrates and probably acts as a virulence factor.</text>
</comment>
<comment type="cofactor">
    <cofactor evidence="1">
        <name>Zn(2+)</name>
        <dbReference type="ChEBI" id="CHEBI:29105"/>
    </cofactor>
    <text evidence="1">Binds 1 zinc ion per subunit.</text>
</comment>
<comment type="subcellular location">
    <subcellularLocation>
        <location evidence="1">Secreted</location>
    </subcellularLocation>
</comment>
<comment type="similarity">
    <text evidence="4">Belongs to the peptidase M36 family.</text>
</comment>
<name>MEP3_ARTGP</name>
<proteinExistence type="evidence at transcript level"/>
<protein>
    <recommendedName>
        <fullName>Extracellular metalloproteinase 3</fullName>
        <ecNumber>3.4.24.-</ecNumber>
    </recommendedName>
    <alternativeName>
        <fullName>Elastinolytic metalloproteinase MEP3</fullName>
    </alternativeName>
    <alternativeName>
        <fullName>Fungalysin MEP3</fullName>
    </alternativeName>
</protein>
<evidence type="ECO:0000250" key="1"/>
<evidence type="ECO:0000255" key="2"/>
<evidence type="ECO:0000255" key="3">
    <source>
        <dbReference type="PROSITE-ProRule" id="PRU10095"/>
    </source>
</evidence>
<evidence type="ECO:0000305" key="4"/>
<reference key="1">
    <citation type="submission" date="2003-11" db="EMBL/GenBank/DDBJ databases">
        <title>Arthroderma gypseum metalloprotease MEP gene, complete.</title>
        <authorList>
            <person name="Kano R."/>
            <person name="Hasegawa A."/>
        </authorList>
    </citation>
    <scope>NUCLEOTIDE SEQUENCE [MRNA]</scope>
    <source>
        <strain>VUT-4004</strain>
    </source>
</reference>
<reference key="2">
    <citation type="journal article" date="2012" name="MBio">
        <title>Comparative genome analysis of Trichophyton rubrum and related dermatophytes reveals candidate genes involved in infection.</title>
        <authorList>
            <person name="Martinez D.A."/>
            <person name="Oliver B.G."/>
            <person name="Graeser Y."/>
            <person name="Goldberg J.M."/>
            <person name="Li W."/>
            <person name="Martinez-Rossi N.M."/>
            <person name="Monod M."/>
            <person name="Shelest E."/>
            <person name="Barton R.C."/>
            <person name="Birch E."/>
            <person name="Brakhage A.A."/>
            <person name="Chen Z."/>
            <person name="Gurr S.J."/>
            <person name="Heiman D."/>
            <person name="Heitman J."/>
            <person name="Kosti I."/>
            <person name="Rossi A."/>
            <person name="Saif S."/>
            <person name="Samalova M."/>
            <person name="Saunders C.W."/>
            <person name="Shea T."/>
            <person name="Summerbell R.C."/>
            <person name="Xu J."/>
            <person name="Young S."/>
            <person name="Zeng Q."/>
            <person name="Birren B.W."/>
            <person name="Cuomo C.A."/>
            <person name="White T.C."/>
        </authorList>
    </citation>
    <scope>NUCLEOTIDE SEQUENCE [LARGE SCALE GENOMIC DNA]</scope>
    <source>
        <strain>ATCC MYA-4604 / CBS 118893</strain>
    </source>
</reference>